<gene>
    <name evidence="1" type="primary">trpA</name>
    <name type="ordered locus">JTY_1626</name>
</gene>
<evidence type="ECO:0000255" key="1">
    <source>
        <dbReference type="HAMAP-Rule" id="MF_00131"/>
    </source>
</evidence>
<comment type="function">
    <text evidence="1">The alpha subunit is responsible for the aldol cleavage of indoleglycerol phosphate to indole and glyceraldehyde 3-phosphate.</text>
</comment>
<comment type="catalytic activity">
    <reaction evidence="1">
        <text>(1S,2R)-1-C-(indol-3-yl)glycerol 3-phosphate + L-serine = D-glyceraldehyde 3-phosphate + L-tryptophan + H2O</text>
        <dbReference type="Rhea" id="RHEA:10532"/>
        <dbReference type="ChEBI" id="CHEBI:15377"/>
        <dbReference type="ChEBI" id="CHEBI:33384"/>
        <dbReference type="ChEBI" id="CHEBI:57912"/>
        <dbReference type="ChEBI" id="CHEBI:58866"/>
        <dbReference type="ChEBI" id="CHEBI:59776"/>
        <dbReference type="EC" id="4.2.1.20"/>
    </reaction>
</comment>
<comment type="pathway">
    <text evidence="1">Amino-acid biosynthesis; L-tryptophan biosynthesis; L-tryptophan from chorismate: step 5/5.</text>
</comment>
<comment type="subunit">
    <text evidence="1">Tetramer of two alpha and two beta chains.</text>
</comment>
<comment type="similarity">
    <text evidence="1">Belongs to the TrpA family.</text>
</comment>
<sequence length="270" mass="27728">MVAVEQSEASRLGPVFDSCRANNRAALIGYLPTGYPDVPASVAAMTALVESGCDIIEVGVPYSDPGMDGPTIARATEAALRGGVRVRDTLAAVEAISIAGGRAVVMTYWNPVLRYGVDAFARDLAAAGGLGLITPDLIPDEAQQWLAASEEHRLDRIFLVAPSSTPERLAATVEASRGFVYAASTMGVTGARDAVSQAAPELVGRVKAVSDIPVGVGLGVRSRAQAAQIAQYADGVIVGSALVTALTEGLPRLRALTGELAAGVRLGMSA</sequence>
<reference key="1">
    <citation type="journal article" date="2009" name="Vaccine">
        <title>Whole genome sequence analysis of Mycobacterium bovis bacillus Calmette-Guerin (BCG) Tokyo 172: a comparative study of BCG vaccine substrains.</title>
        <authorList>
            <person name="Seki M."/>
            <person name="Honda I."/>
            <person name="Fujita I."/>
            <person name="Yano I."/>
            <person name="Yamamoto S."/>
            <person name="Koyama A."/>
        </authorList>
    </citation>
    <scope>NUCLEOTIDE SEQUENCE [LARGE SCALE GENOMIC DNA]</scope>
    <source>
        <strain>BCG / Tokyo 172 / ATCC 35737 / TMC 1019</strain>
    </source>
</reference>
<organism>
    <name type="scientific">Mycobacterium bovis (strain BCG / Tokyo 172 / ATCC 35737 / TMC 1019)</name>
    <dbReference type="NCBI Taxonomy" id="561275"/>
    <lineage>
        <taxon>Bacteria</taxon>
        <taxon>Bacillati</taxon>
        <taxon>Actinomycetota</taxon>
        <taxon>Actinomycetes</taxon>
        <taxon>Mycobacteriales</taxon>
        <taxon>Mycobacteriaceae</taxon>
        <taxon>Mycobacterium</taxon>
        <taxon>Mycobacterium tuberculosis complex</taxon>
    </lineage>
</organism>
<keyword id="KW-0028">Amino-acid biosynthesis</keyword>
<keyword id="KW-0057">Aromatic amino acid biosynthesis</keyword>
<keyword id="KW-0456">Lyase</keyword>
<keyword id="KW-0822">Tryptophan biosynthesis</keyword>
<dbReference type="EC" id="4.2.1.20" evidence="1"/>
<dbReference type="EMBL" id="AP010918">
    <property type="protein sequence ID" value="BAH25914.1"/>
    <property type="molecule type" value="Genomic_DNA"/>
</dbReference>
<dbReference type="RefSeq" id="WP_003407999.1">
    <property type="nucleotide sequence ID" value="NZ_CP014566.1"/>
</dbReference>
<dbReference type="SMR" id="C1ANN5"/>
<dbReference type="GeneID" id="45425581"/>
<dbReference type="KEGG" id="mbt:JTY_1626"/>
<dbReference type="HOGENOM" id="CLU_016734_0_0_11"/>
<dbReference type="UniPathway" id="UPA00035">
    <property type="reaction ID" value="UER00044"/>
</dbReference>
<dbReference type="GO" id="GO:0005829">
    <property type="term" value="C:cytosol"/>
    <property type="evidence" value="ECO:0007669"/>
    <property type="project" value="TreeGrafter"/>
</dbReference>
<dbReference type="GO" id="GO:0004834">
    <property type="term" value="F:tryptophan synthase activity"/>
    <property type="evidence" value="ECO:0007669"/>
    <property type="project" value="UniProtKB-UniRule"/>
</dbReference>
<dbReference type="CDD" id="cd04724">
    <property type="entry name" value="Tryptophan_synthase_alpha"/>
    <property type="match status" value="1"/>
</dbReference>
<dbReference type="FunFam" id="3.20.20.70:FF:000037">
    <property type="entry name" value="Tryptophan synthase alpha chain"/>
    <property type="match status" value="1"/>
</dbReference>
<dbReference type="Gene3D" id="3.20.20.70">
    <property type="entry name" value="Aldolase class I"/>
    <property type="match status" value="1"/>
</dbReference>
<dbReference type="HAMAP" id="MF_00131">
    <property type="entry name" value="Trp_synth_alpha"/>
    <property type="match status" value="1"/>
</dbReference>
<dbReference type="InterPro" id="IPR013785">
    <property type="entry name" value="Aldolase_TIM"/>
</dbReference>
<dbReference type="InterPro" id="IPR011060">
    <property type="entry name" value="RibuloseP-bd_barrel"/>
</dbReference>
<dbReference type="InterPro" id="IPR018204">
    <property type="entry name" value="Trp_synthase_alpha_AS"/>
</dbReference>
<dbReference type="InterPro" id="IPR002028">
    <property type="entry name" value="Trp_synthase_suA"/>
</dbReference>
<dbReference type="NCBIfam" id="TIGR00262">
    <property type="entry name" value="trpA"/>
    <property type="match status" value="1"/>
</dbReference>
<dbReference type="PANTHER" id="PTHR43406:SF1">
    <property type="entry name" value="TRYPTOPHAN SYNTHASE ALPHA CHAIN, CHLOROPLASTIC"/>
    <property type="match status" value="1"/>
</dbReference>
<dbReference type="PANTHER" id="PTHR43406">
    <property type="entry name" value="TRYPTOPHAN SYNTHASE, ALPHA CHAIN"/>
    <property type="match status" value="1"/>
</dbReference>
<dbReference type="Pfam" id="PF00290">
    <property type="entry name" value="Trp_syntA"/>
    <property type="match status" value="1"/>
</dbReference>
<dbReference type="SUPFAM" id="SSF51366">
    <property type="entry name" value="Ribulose-phoshate binding barrel"/>
    <property type="match status" value="1"/>
</dbReference>
<dbReference type="PROSITE" id="PS00167">
    <property type="entry name" value="TRP_SYNTHASE_ALPHA"/>
    <property type="match status" value="1"/>
</dbReference>
<proteinExistence type="inferred from homology"/>
<accession>C1ANN5</accession>
<name>TRPA_MYCBT</name>
<feature type="chain" id="PRO_1000198719" description="Tryptophan synthase alpha chain">
    <location>
        <begin position="1"/>
        <end position="270"/>
    </location>
</feature>
<feature type="active site" description="Proton acceptor" evidence="1">
    <location>
        <position position="57"/>
    </location>
</feature>
<feature type="active site" description="Proton acceptor" evidence="1">
    <location>
        <position position="68"/>
    </location>
</feature>
<protein>
    <recommendedName>
        <fullName evidence="1">Tryptophan synthase alpha chain</fullName>
        <ecNumber evidence="1">4.2.1.20</ecNumber>
    </recommendedName>
</protein>